<accession>Q5D704</accession>
<accession>A0T0H1</accession>
<proteinExistence type="inferred from homology"/>
<organism>
    <name type="scientific">Phaeodactylum tricornutum (strain CCAP 1055/1)</name>
    <dbReference type="NCBI Taxonomy" id="556484"/>
    <lineage>
        <taxon>Eukaryota</taxon>
        <taxon>Sar</taxon>
        <taxon>Stramenopiles</taxon>
        <taxon>Ochrophyta</taxon>
        <taxon>Bacillariophyta</taxon>
        <taxon>Bacillariophyceae</taxon>
        <taxon>Bacillariophycidae</taxon>
        <taxon>Naviculales</taxon>
        <taxon>Phaeodactylaceae</taxon>
        <taxon>Phaeodactylum</taxon>
    </lineage>
</organism>
<evidence type="ECO:0000255" key="1">
    <source>
        <dbReference type="HAMAP-Rule" id="MF_00385"/>
    </source>
</evidence>
<evidence type="ECO:0000305" key="2"/>
<gene>
    <name evidence="1" type="primary">rps16</name>
</gene>
<feature type="chain" id="PRO_0000167314" description="Small ribosomal subunit protein bS16c">
    <location>
        <begin position="1"/>
        <end position="78"/>
    </location>
</feature>
<keyword id="KW-0150">Chloroplast</keyword>
<keyword id="KW-0934">Plastid</keyword>
<keyword id="KW-1185">Reference proteome</keyword>
<keyword id="KW-0687">Ribonucleoprotein</keyword>
<keyword id="KW-0689">Ribosomal protein</keyword>
<sequence length="78" mass="9217">MLKLRLKRTGRKRSPSYRLVVMENTARRDGRPIEELGYYSPITKQYKFDVEKIKKWLDFGVKPTETVSSLLRKAEIIS</sequence>
<comment type="subcellular location">
    <subcellularLocation>
        <location>Plastid</location>
        <location>Chloroplast</location>
    </subcellularLocation>
</comment>
<comment type="similarity">
    <text evidence="1">Belongs to the bacterial ribosomal protein bS16 family.</text>
</comment>
<protein>
    <recommendedName>
        <fullName evidence="1">Small ribosomal subunit protein bS16c</fullName>
    </recommendedName>
    <alternativeName>
        <fullName evidence="2">30S ribosomal protein S16, chloroplastic</fullName>
    </alternativeName>
</protein>
<geneLocation type="chloroplast"/>
<name>RR16_PHATC</name>
<dbReference type="EMBL" id="EF067920">
    <property type="protein sequence ID" value="ABK20669.1"/>
    <property type="molecule type" value="Genomic_DNA"/>
</dbReference>
<dbReference type="RefSeq" id="YP_874446.1">
    <property type="nucleotide sequence ID" value="NC_008588.1"/>
</dbReference>
<dbReference type="SMR" id="Q5D704"/>
<dbReference type="STRING" id="556484.Q5D704"/>
<dbReference type="GeneID" id="4524546"/>
<dbReference type="InParanoid" id="Q5D704"/>
<dbReference type="Proteomes" id="UP000000759">
    <property type="component" value="Chloroplast"/>
</dbReference>
<dbReference type="GO" id="GO:0009507">
    <property type="term" value="C:chloroplast"/>
    <property type="evidence" value="ECO:0007669"/>
    <property type="project" value="UniProtKB-SubCell"/>
</dbReference>
<dbReference type="GO" id="GO:0005739">
    <property type="term" value="C:mitochondrion"/>
    <property type="evidence" value="ECO:0007669"/>
    <property type="project" value="GOC"/>
</dbReference>
<dbReference type="GO" id="GO:0015935">
    <property type="term" value="C:small ribosomal subunit"/>
    <property type="evidence" value="ECO:0007669"/>
    <property type="project" value="TreeGrafter"/>
</dbReference>
<dbReference type="GO" id="GO:0003735">
    <property type="term" value="F:structural constituent of ribosome"/>
    <property type="evidence" value="ECO:0007669"/>
    <property type="project" value="InterPro"/>
</dbReference>
<dbReference type="GO" id="GO:0032543">
    <property type="term" value="P:mitochondrial translation"/>
    <property type="evidence" value="ECO:0007669"/>
    <property type="project" value="TreeGrafter"/>
</dbReference>
<dbReference type="Gene3D" id="3.30.1320.10">
    <property type="match status" value="1"/>
</dbReference>
<dbReference type="HAMAP" id="MF_00385">
    <property type="entry name" value="Ribosomal_bS16"/>
    <property type="match status" value="1"/>
</dbReference>
<dbReference type="InterPro" id="IPR000307">
    <property type="entry name" value="Ribosomal_bS16"/>
</dbReference>
<dbReference type="InterPro" id="IPR020592">
    <property type="entry name" value="Ribosomal_bS16_CS"/>
</dbReference>
<dbReference type="InterPro" id="IPR023803">
    <property type="entry name" value="Ribosomal_bS16_dom_sf"/>
</dbReference>
<dbReference type="NCBIfam" id="TIGR00002">
    <property type="entry name" value="S16"/>
    <property type="match status" value="1"/>
</dbReference>
<dbReference type="PANTHER" id="PTHR12919">
    <property type="entry name" value="30S RIBOSOMAL PROTEIN S16"/>
    <property type="match status" value="1"/>
</dbReference>
<dbReference type="PANTHER" id="PTHR12919:SF20">
    <property type="entry name" value="SMALL RIBOSOMAL SUBUNIT PROTEIN BS16M"/>
    <property type="match status" value="1"/>
</dbReference>
<dbReference type="Pfam" id="PF00886">
    <property type="entry name" value="Ribosomal_S16"/>
    <property type="match status" value="1"/>
</dbReference>
<dbReference type="SUPFAM" id="SSF54565">
    <property type="entry name" value="Ribosomal protein S16"/>
    <property type="match status" value="1"/>
</dbReference>
<dbReference type="PROSITE" id="PS00732">
    <property type="entry name" value="RIBOSOMAL_S16"/>
    <property type="match status" value="1"/>
</dbReference>
<reference key="1">
    <citation type="journal article" date="2007" name="Mol. Genet. Genomics">
        <title>Chloroplast genomes of the diatoms Phaeodactylum tricornutum and Thalassiosira pseudonana: comparison with other plastid genomes of the red lineage.</title>
        <authorList>
            <person name="Oudot-Le Secq M.-P."/>
            <person name="Grimwood J."/>
            <person name="Shapiro H."/>
            <person name="Armbrust E.V."/>
            <person name="Bowler C."/>
            <person name="Green B.R."/>
        </authorList>
    </citation>
    <scope>NUCLEOTIDE SEQUENCE [LARGE SCALE GENOMIC DNA]</scope>
    <source>
        <strain>CCAP 1055/1</strain>
    </source>
</reference>